<comment type="function">
    <text evidence="1">One of the primary rRNA binding proteins, it binds directly near the 3'-end of the 23S rRNA, where it nucleates assembly of the 50S subunit.</text>
</comment>
<comment type="subunit">
    <text>Part of the 50S ribosomal subunit.</text>
</comment>
<comment type="subcellular location">
    <subcellularLocation>
        <location evidence="4">Plastid</location>
        <location evidence="4">Chloroplast</location>
    </subcellularLocation>
</comment>
<comment type="similarity">
    <text evidence="4">Belongs to the universal ribosomal protein uL3 family.</text>
</comment>
<protein>
    <recommendedName>
        <fullName evidence="4">Large ribosomal subunit protein uL3c</fullName>
    </recommendedName>
    <alternativeName>
        <fullName>50S ribosomal protein L3, chloroplastic</fullName>
    </alternativeName>
</protein>
<proteinExistence type="evidence at transcript level"/>
<gene>
    <name type="primary">RPL3</name>
</gene>
<evidence type="ECO:0000250" key="1"/>
<evidence type="ECO:0000255" key="2"/>
<evidence type="ECO:0000256" key="3">
    <source>
        <dbReference type="SAM" id="MobiDB-lite"/>
    </source>
</evidence>
<evidence type="ECO:0000305" key="4"/>
<accession>O80360</accession>
<sequence length="259" mass="28369">LKTTPLTLRSPFLHRLPLRALKTHKPTSLHISKSSISASLEAGVGVMATKLGMMSFFEESGTVVPVTVVGFREGNIVTQIKTEATDGYNAVQVGYRRVRDRKLTKPEMGHLEKSGIIPLRHLQEFRLQSIDGFEVTQKLDFGELFKEGDLVDVSGTTIGKGFQGGIKRHNFKRGQMTHGSKSHRQLGSIGAGTTPGRVYKGKKMPGRMGGTKRKIRKLKIVKIDDQLNIIMIKGALPGKPGNLLRIAPAKIVGKNIPKS</sequence>
<reference key="1">
    <citation type="submission" date="1998-01" db="EMBL/GenBank/DDBJ databases">
        <title>Tobacco chloroplast ribosomal protein L3.</title>
        <authorList>
            <person name="Yokoi F."/>
            <person name="Sugiura M."/>
            <person name="Ohta M."/>
            <person name="Tanave F."/>
        </authorList>
    </citation>
    <scope>NUCLEOTIDE SEQUENCE [MRNA]</scope>
    <source>
        <strain>cv. Bright Yellow 4</strain>
        <tissue>Leaf</tissue>
    </source>
</reference>
<keyword id="KW-0150">Chloroplast</keyword>
<keyword id="KW-0934">Plastid</keyword>
<keyword id="KW-1185">Reference proteome</keyword>
<keyword id="KW-0687">Ribonucleoprotein</keyword>
<keyword id="KW-0689">Ribosomal protein</keyword>
<keyword id="KW-0694">RNA-binding</keyword>
<keyword id="KW-0699">rRNA-binding</keyword>
<keyword id="KW-0809">Transit peptide</keyword>
<organism>
    <name type="scientific">Nicotiana tabacum</name>
    <name type="common">Common tobacco</name>
    <dbReference type="NCBI Taxonomy" id="4097"/>
    <lineage>
        <taxon>Eukaryota</taxon>
        <taxon>Viridiplantae</taxon>
        <taxon>Streptophyta</taxon>
        <taxon>Embryophyta</taxon>
        <taxon>Tracheophyta</taxon>
        <taxon>Spermatophyta</taxon>
        <taxon>Magnoliopsida</taxon>
        <taxon>eudicotyledons</taxon>
        <taxon>Gunneridae</taxon>
        <taxon>Pentapetalae</taxon>
        <taxon>asterids</taxon>
        <taxon>lamiids</taxon>
        <taxon>Solanales</taxon>
        <taxon>Solanaceae</taxon>
        <taxon>Nicotianoideae</taxon>
        <taxon>Nicotianeae</taxon>
        <taxon>Nicotiana</taxon>
    </lineage>
</organism>
<dbReference type="EMBL" id="AB010877">
    <property type="protein sequence ID" value="BAA31509.1"/>
    <property type="molecule type" value="mRNA"/>
</dbReference>
<dbReference type="PIR" id="T01736">
    <property type="entry name" value="T01736"/>
</dbReference>
<dbReference type="SMR" id="O80360"/>
<dbReference type="STRING" id="4097.O80360"/>
<dbReference type="PaxDb" id="4097-O80360"/>
<dbReference type="ProMEX" id="O80360"/>
<dbReference type="Proteomes" id="UP000084051">
    <property type="component" value="Unplaced"/>
</dbReference>
<dbReference type="GO" id="GO:0009507">
    <property type="term" value="C:chloroplast"/>
    <property type="evidence" value="ECO:0007669"/>
    <property type="project" value="UniProtKB-SubCell"/>
</dbReference>
<dbReference type="GO" id="GO:1990904">
    <property type="term" value="C:ribonucleoprotein complex"/>
    <property type="evidence" value="ECO:0007669"/>
    <property type="project" value="UniProtKB-KW"/>
</dbReference>
<dbReference type="GO" id="GO:0005840">
    <property type="term" value="C:ribosome"/>
    <property type="evidence" value="ECO:0007669"/>
    <property type="project" value="UniProtKB-KW"/>
</dbReference>
<dbReference type="GO" id="GO:0019843">
    <property type="term" value="F:rRNA binding"/>
    <property type="evidence" value="ECO:0007669"/>
    <property type="project" value="UniProtKB-KW"/>
</dbReference>
<dbReference type="GO" id="GO:0003735">
    <property type="term" value="F:structural constituent of ribosome"/>
    <property type="evidence" value="ECO:0000318"/>
    <property type="project" value="GO_Central"/>
</dbReference>
<dbReference type="GO" id="GO:0006412">
    <property type="term" value="P:translation"/>
    <property type="evidence" value="ECO:0007669"/>
    <property type="project" value="InterPro"/>
</dbReference>
<dbReference type="FunFam" id="3.30.160.810:FF:000001">
    <property type="entry name" value="50S ribosomal protein L3"/>
    <property type="match status" value="1"/>
</dbReference>
<dbReference type="FunFam" id="2.40.30.10:FF:000065">
    <property type="entry name" value="50S ribosomal protein L3, chloroplastic"/>
    <property type="match status" value="1"/>
</dbReference>
<dbReference type="Gene3D" id="3.30.160.810">
    <property type="match status" value="1"/>
</dbReference>
<dbReference type="Gene3D" id="2.40.30.10">
    <property type="entry name" value="Translation factors"/>
    <property type="match status" value="1"/>
</dbReference>
<dbReference type="HAMAP" id="MF_01325_B">
    <property type="entry name" value="Ribosomal_uL3_B"/>
    <property type="match status" value="1"/>
</dbReference>
<dbReference type="InterPro" id="IPR000597">
    <property type="entry name" value="Ribosomal_uL3"/>
</dbReference>
<dbReference type="InterPro" id="IPR019927">
    <property type="entry name" value="Ribosomal_uL3_bac/org-type"/>
</dbReference>
<dbReference type="InterPro" id="IPR019926">
    <property type="entry name" value="Ribosomal_uL3_CS"/>
</dbReference>
<dbReference type="InterPro" id="IPR009000">
    <property type="entry name" value="Transl_B-barrel_sf"/>
</dbReference>
<dbReference type="NCBIfam" id="TIGR03625">
    <property type="entry name" value="L3_bact"/>
    <property type="match status" value="1"/>
</dbReference>
<dbReference type="PANTHER" id="PTHR11229">
    <property type="entry name" value="50S RIBOSOMAL PROTEIN L3"/>
    <property type="match status" value="1"/>
</dbReference>
<dbReference type="PANTHER" id="PTHR11229:SF16">
    <property type="entry name" value="LARGE RIBOSOMAL SUBUNIT PROTEIN UL3C"/>
    <property type="match status" value="1"/>
</dbReference>
<dbReference type="Pfam" id="PF00297">
    <property type="entry name" value="Ribosomal_L3"/>
    <property type="match status" value="1"/>
</dbReference>
<dbReference type="SUPFAM" id="SSF50447">
    <property type="entry name" value="Translation proteins"/>
    <property type="match status" value="1"/>
</dbReference>
<dbReference type="PROSITE" id="PS00474">
    <property type="entry name" value="RIBOSOMAL_L3"/>
    <property type="match status" value="1"/>
</dbReference>
<feature type="transit peptide" description="Chloroplast" evidence="2">
    <location>
        <begin position="1" status="less than"/>
        <end position="37"/>
    </location>
</feature>
<feature type="chain" id="PRO_0000030535" description="Large ribosomal subunit protein uL3c">
    <location>
        <begin position="38"/>
        <end position="259"/>
    </location>
</feature>
<feature type="region of interest" description="Disordered" evidence="3">
    <location>
        <begin position="176"/>
        <end position="211"/>
    </location>
</feature>
<feature type="compositionally biased region" description="Basic residues" evidence="3">
    <location>
        <begin position="199"/>
        <end position="211"/>
    </location>
</feature>
<feature type="non-terminal residue">
    <location>
        <position position="1"/>
    </location>
</feature>
<name>RK3_TOBAC</name>